<comment type="function">
    <text evidence="1">Required for dimerization of active 70S ribosomes into 100S ribosomes in stationary phase; 100S ribosomes are translationally inactive and sometimes present during exponential growth.</text>
</comment>
<comment type="subunit">
    <text evidence="1">Interacts with 100S ribosomes.</text>
</comment>
<comment type="subcellular location">
    <subcellularLocation>
        <location evidence="1">Cytoplasm</location>
    </subcellularLocation>
</comment>
<comment type="similarity">
    <text evidence="1">Belongs to the HPF/YfiA ribosome-associated protein family. Long HPF subfamily.</text>
</comment>
<reference key="1">
    <citation type="journal article" date="2001" name="Lancet">
        <title>Whole genome sequencing of meticillin-resistant Staphylococcus aureus.</title>
        <authorList>
            <person name="Kuroda M."/>
            <person name="Ohta T."/>
            <person name="Uchiyama I."/>
            <person name="Baba T."/>
            <person name="Yuzawa H."/>
            <person name="Kobayashi I."/>
            <person name="Cui L."/>
            <person name="Oguchi A."/>
            <person name="Aoki K."/>
            <person name="Nagai Y."/>
            <person name="Lian J.-Q."/>
            <person name="Ito T."/>
            <person name="Kanamori M."/>
            <person name="Matsumaru H."/>
            <person name="Maruyama A."/>
            <person name="Murakami H."/>
            <person name="Hosoyama A."/>
            <person name="Mizutani-Ui Y."/>
            <person name="Takahashi N.K."/>
            <person name="Sawano T."/>
            <person name="Inoue R."/>
            <person name="Kaito C."/>
            <person name="Sekimizu K."/>
            <person name="Hirakawa H."/>
            <person name="Kuhara S."/>
            <person name="Goto S."/>
            <person name="Yabuzaki J."/>
            <person name="Kanehisa M."/>
            <person name="Yamashita A."/>
            <person name="Oshima K."/>
            <person name="Furuya K."/>
            <person name="Yoshino C."/>
            <person name="Shiba T."/>
            <person name="Hattori M."/>
            <person name="Ogasawara N."/>
            <person name="Hayashi H."/>
            <person name="Hiramatsu K."/>
        </authorList>
    </citation>
    <scope>NUCLEOTIDE SEQUENCE [LARGE SCALE GENOMIC DNA]</scope>
    <source>
        <strain>N315</strain>
    </source>
</reference>
<reference key="2">
    <citation type="journal article" date="2005" name="J. Microbiol. Methods">
        <title>Correlation of proteomic and transcriptomic profiles of Staphylococcus aureus during the post-exponential phase of growth.</title>
        <authorList>
            <person name="Scherl A."/>
            <person name="Francois P."/>
            <person name="Bento M."/>
            <person name="Deshusses J.M."/>
            <person name="Charbonnier Y."/>
            <person name="Converset V."/>
            <person name="Huyghe A."/>
            <person name="Walter N."/>
            <person name="Hoogland C."/>
            <person name="Appel R.D."/>
            <person name="Sanchez J.-C."/>
            <person name="Zimmermann-Ivol C.G."/>
            <person name="Corthals G.L."/>
            <person name="Hochstrasser D.F."/>
            <person name="Schrenzel J."/>
        </authorList>
    </citation>
    <scope>IDENTIFICATION BY MASS SPECTROMETRY</scope>
    <source>
        <strain>N315</strain>
    </source>
</reference>
<reference key="3">
    <citation type="submission" date="2007-10" db="UniProtKB">
        <title>Shotgun proteomic analysis of total and membrane protein extracts of S. aureus strain N315.</title>
        <authorList>
            <person name="Vaezzadeh A.R."/>
            <person name="Deshusses J."/>
            <person name="Lescuyer P."/>
            <person name="Hochstrasser D.F."/>
        </authorList>
    </citation>
    <scope>IDENTIFICATION BY MASS SPECTROMETRY [LARGE SCALE ANALYSIS]</scope>
    <source>
        <strain>N315</strain>
    </source>
</reference>
<proteinExistence type="evidence at protein level"/>
<accession>Q7A6R6</accession>
<organism>
    <name type="scientific">Staphylococcus aureus (strain N315)</name>
    <dbReference type="NCBI Taxonomy" id="158879"/>
    <lineage>
        <taxon>Bacteria</taxon>
        <taxon>Bacillati</taxon>
        <taxon>Bacillota</taxon>
        <taxon>Bacilli</taxon>
        <taxon>Bacillales</taxon>
        <taxon>Staphylococcaceae</taxon>
        <taxon>Staphylococcus</taxon>
    </lineage>
</organism>
<keyword id="KW-0963">Cytoplasm</keyword>
<keyword id="KW-0810">Translation regulation</keyword>
<name>HPF_STAAN</name>
<feature type="chain" id="PRO_0000291318" description="Ribosome hibernation promotion factor">
    <location>
        <begin position="1"/>
        <end position="190"/>
    </location>
</feature>
<sequence length="190" mass="22213">MIRFEIHGDNLTITDAIRNYIEEKIGKLERYFNDVPNAVAHVKVKTYSNSATKIEVTIPLKNVTLRAEERNDDLYAGIDLINNKLERQVRKYKTRINRKSRDRGDQEVFVAELQEMQETQVDNDAYDDNEIEIIRSKEFSLKPMDSEEAVLQMNLLGHDFFVFTDRETDGTSIVYRRKDGKYGLIQTSEQ</sequence>
<protein>
    <recommendedName>
        <fullName evidence="1">Ribosome hibernation promotion factor</fullName>
        <shortName evidence="1">HPF</shortName>
    </recommendedName>
</protein>
<dbReference type="EMBL" id="BA000018">
    <property type="protein sequence ID" value="BAB41940.1"/>
    <property type="molecule type" value="Genomic_DNA"/>
</dbReference>
<dbReference type="PIR" id="A89848">
    <property type="entry name" value="A89848"/>
</dbReference>
<dbReference type="RefSeq" id="WP_000617735.1">
    <property type="nucleotide sequence ID" value="NC_002745.2"/>
</dbReference>
<dbReference type="SMR" id="Q7A6R6"/>
<dbReference type="EnsemblBacteria" id="BAB41940">
    <property type="protein sequence ID" value="BAB41940"/>
    <property type="gene ID" value="BAB41940"/>
</dbReference>
<dbReference type="KEGG" id="sau:SA0707"/>
<dbReference type="HOGENOM" id="CLU_071472_0_3_9"/>
<dbReference type="GO" id="GO:0022627">
    <property type="term" value="C:cytosolic small ribosomal subunit"/>
    <property type="evidence" value="ECO:0007669"/>
    <property type="project" value="TreeGrafter"/>
</dbReference>
<dbReference type="GO" id="GO:0043024">
    <property type="term" value="F:ribosomal small subunit binding"/>
    <property type="evidence" value="ECO:0007669"/>
    <property type="project" value="TreeGrafter"/>
</dbReference>
<dbReference type="GO" id="GO:0045900">
    <property type="term" value="P:negative regulation of translational elongation"/>
    <property type="evidence" value="ECO:0007669"/>
    <property type="project" value="TreeGrafter"/>
</dbReference>
<dbReference type="CDD" id="cd00552">
    <property type="entry name" value="RaiA"/>
    <property type="match status" value="1"/>
</dbReference>
<dbReference type="FunFam" id="3.30.160.100:FF:000003">
    <property type="entry name" value="Ribosome hibernation promoting factor"/>
    <property type="match status" value="1"/>
</dbReference>
<dbReference type="FunFam" id="3.30.505.50:FF:000001">
    <property type="entry name" value="Ribosome hibernation promoting factor"/>
    <property type="match status" value="1"/>
</dbReference>
<dbReference type="Gene3D" id="3.30.160.100">
    <property type="entry name" value="Ribosome hibernation promotion factor-like"/>
    <property type="match status" value="1"/>
</dbReference>
<dbReference type="Gene3D" id="3.30.505.50">
    <property type="entry name" value="Sigma 54 modulation/S30EA ribosomal protein, C-terminal domain"/>
    <property type="match status" value="1"/>
</dbReference>
<dbReference type="HAMAP" id="MF_00839">
    <property type="entry name" value="HPF"/>
    <property type="match status" value="1"/>
</dbReference>
<dbReference type="InterPro" id="IPR050574">
    <property type="entry name" value="HPF/YfiA_ribosome-assoc"/>
</dbReference>
<dbReference type="InterPro" id="IPR034694">
    <property type="entry name" value="HPF_long/plastid"/>
</dbReference>
<dbReference type="InterPro" id="IPR036567">
    <property type="entry name" value="RHF-like"/>
</dbReference>
<dbReference type="InterPro" id="IPR003489">
    <property type="entry name" value="RHF/RaiA"/>
</dbReference>
<dbReference type="InterPro" id="IPR032528">
    <property type="entry name" value="Ribosom_S30AE_C"/>
</dbReference>
<dbReference type="InterPro" id="IPR038416">
    <property type="entry name" value="Ribosom_S30AE_C_sf"/>
</dbReference>
<dbReference type="NCBIfam" id="TIGR00741">
    <property type="entry name" value="yfiA"/>
    <property type="match status" value="1"/>
</dbReference>
<dbReference type="PANTHER" id="PTHR33231">
    <property type="entry name" value="30S RIBOSOMAL PROTEIN"/>
    <property type="match status" value="1"/>
</dbReference>
<dbReference type="PANTHER" id="PTHR33231:SF1">
    <property type="entry name" value="30S RIBOSOMAL PROTEIN"/>
    <property type="match status" value="1"/>
</dbReference>
<dbReference type="Pfam" id="PF16321">
    <property type="entry name" value="Ribosom_S30AE_C"/>
    <property type="match status" value="1"/>
</dbReference>
<dbReference type="Pfam" id="PF02482">
    <property type="entry name" value="Ribosomal_S30AE"/>
    <property type="match status" value="1"/>
</dbReference>
<dbReference type="SUPFAM" id="SSF69754">
    <property type="entry name" value="Ribosome binding protein Y (YfiA homologue)"/>
    <property type="match status" value="1"/>
</dbReference>
<gene>
    <name evidence="1" type="primary">hpf</name>
    <name type="ordered locus">SA0707</name>
</gene>
<evidence type="ECO:0000255" key="1">
    <source>
        <dbReference type="HAMAP-Rule" id="MF_00839"/>
    </source>
</evidence>